<keyword id="KW-0963">Cytoplasm</keyword>
<keyword id="KW-0690">Ribosome biogenesis</keyword>
<name>RIMP_RICAE</name>
<feature type="chain" id="PRO_0000384750" description="Ribosome maturation factor RimP">
    <location>
        <begin position="1"/>
        <end position="161"/>
    </location>
</feature>
<sequence>MQTIEQQIANVIEESLTDMGFELVLVKFKGVNPKVVEILIDSLNSEKISVEDCTKASRTISAILDVEDLIEAAYSLEVASSGLERPLVKFENYNRFLEREVKITLKELLNGKTRYQGKIIKAENNKIYLKCEEQEVLIDYDLIKNANLVLTEEVFKKLLKQ</sequence>
<protein>
    <recommendedName>
        <fullName evidence="1">Ribosome maturation factor RimP</fullName>
    </recommendedName>
</protein>
<accession>C3PNX3</accession>
<proteinExistence type="inferred from homology"/>
<gene>
    <name evidence="1" type="primary">rimP</name>
    <name type="ordered locus">RAF_ORF0746</name>
</gene>
<comment type="function">
    <text evidence="1">Required for maturation of 30S ribosomal subunits.</text>
</comment>
<comment type="subcellular location">
    <subcellularLocation>
        <location evidence="1">Cytoplasm</location>
    </subcellularLocation>
</comment>
<comment type="similarity">
    <text evidence="1">Belongs to the RimP family.</text>
</comment>
<dbReference type="EMBL" id="CP001612">
    <property type="protein sequence ID" value="ACP53633.1"/>
    <property type="molecule type" value="Genomic_DNA"/>
</dbReference>
<dbReference type="RefSeq" id="WP_004998168.1">
    <property type="nucleotide sequence ID" value="NC_012633.1"/>
</dbReference>
<dbReference type="SMR" id="C3PNX3"/>
<dbReference type="GeneID" id="95361350"/>
<dbReference type="KEGG" id="raf:RAF_ORF0746"/>
<dbReference type="HOGENOM" id="CLU_070525_0_2_5"/>
<dbReference type="Proteomes" id="UP000002305">
    <property type="component" value="Chromosome"/>
</dbReference>
<dbReference type="GO" id="GO:0005829">
    <property type="term" value="C:cytosol"/>
    <property type="evidence" value="ECO:0007669"/>
    <property type="project" value="TreeGrafter"/>
</dbReference>
<dbReference type="GO" id="GO:0000028">
    <property type="term" value="P:ribosomal small subunit assembly"/>
    <property type="evidence" value="ECO:0007669"/>
    <property type="project" value="TreeGrafter"/>
</dbReference>
<dbReference type="GO" id="GO:0006412">
    <property type="term" value="P:translation"/>
    <property type="evidence" value="ECO:0007669"/>
    <property type="project" value="TreeGrafter"/>
</dbReference>
<dbReference type="CDD" id="cd01734">
    <property type="entry name" value="YlxS_C"/>
    <property type="match status" value="1"/>
</dbReference>
<dbReference type="Gene3D" id="2.30.30.180">
    <property type="entry name" value="Ribosome maturation factor RimP, C-terminal domain"/>
    <property type="match status" value="1"/>
</dbReference>
<dbReference type="Gene3D" id="3.30.300.70">
    <property type="entry name" value="RimP-like superfamily, N-terminal"/>
    <property type="match status" value="1"/>
</dbReference>
<dbReference type="HAMAP" id="MF_01077">
    <property type="entry name" value="RimP"/>
    <property type="match status" value="1"/>
</dbReference>
<dbReference type="InterPro" id="IPR003728">
    <property type="entry name" value="Ribosome_maturation_RimP"/>
</dbReference>
<dbReference type="InterPro" id="IPR028998">
    <property type="entry name" value="RimP_C"/>
</dbReference>
<dbReference type="InterPro" id="IPR036847">
    <property type="entry name" value="RimP_C_sf"/>
</dbReference>
<dbReference type="InterPro" id="IPR028989">
    <property type="entry name" value="RimP_N"/>
</dbReference>
<dbReference type="InterPro" id="IPR035956">
    <property type="entry name" value="RimP_N_sf"/>
</dbReference>
<dbReference type="NCBIfam" id="NF000937">
    <property type="entry name" value="PRK00092.4-3"/>
    <property type="match status" value="1"/>
</dbReference>
<dbReference type="PANTHER" id="PTHR33867">
    <property type="entry name" value="RIBOSOME MATURATION FACTOR RIMP"/>
    <property type="match status" value="1"/>
</dbReference>
<dbReference type="PANTHER" id="PTHR33867:SF1">
    <property type="entry name" value="RIBOSOME MATURATION FACTOR RIMP"/>
    <property type="match status" value="1"/>
</dbReference>
<dbReference type="Pfam" id="PF17384">
    <property type="entry name" value="DUF150_C"/>
    <property type="match status" value="1"/>
</dbReference>
<dbReference type="Pfam" id="PF02576">
    <property type="entry name" value="RimP_N"/>
    <property type="match status" value="1"/>
</dbReference>
<dbReference type="SUPFAM" id="SSF74942">
    <property type="entry name" value="YhbC-like, C-terminal domain"/>
    <property type="match status" value="1"/>
</dbReference>
<dbReference type="SUPFAM" id="SSF75420">
    <property type="entry name" value="YhbC-like, N-terminal domain"/>
    <property type="match status" value="1"/>
</dbReference>
<organism>
    <name type="scientific">Rickettsia africae (strain ESF-5)</name>
    <dbReference type="NCBI Taxonomy" id="347255"/>
    <lineage>
        <taxon>Bacteria</taxon>
        <taxon>Pseudomonadati</taxon>
        <taxon>Pseudomonadota</taxon>
        <taxon>Alphaproteobacteria</taxon>
        <taxon>Rickettsiales</taxon>
        <taxon>Rickettsiaceae</taxon>
        <taxon>Rickettsieae</taxon>
        <taxon>Rickettsia</taxon>
        <taxon>spotted fever group</taxon>
    </lineage>
</organism>
<evidence type="ECO:0000255" key="1">
    <source>
        <dbReference type="HAMAP-Rule" id="MF_01077"/>
    </source>
</evidence>
<reference key="1">
    <citation type="journal article" date="2009" name="BMC Genomics">
        <title>Analysis of the Rickettsia africae genome reveals that virulence acquisition in Rickettsia species may be explained by genome reduction.</title>
        <authorList>
            <person name="Fournier P.-E."/>
            <person name="El Karkouri K."/>
            <person name="Leroy Q."/>
            <person name="Robert C."/>
            <person name="Giumelli B."/>
            <person name="Renesto P."/>
            <person name="Socolovschi C."/>
            <person name="Parola P."/>
            <person name="Audic S."/>
            <person name="Raoult D."/>
        </authorList>
    </citation>
    <scope>NUCLEOTIDE SEQUENCE [LARGE SCALE GENOMIC DNA]</scope>
    <source>
        <strain>ESF-5</strain>
    </source>
</reference>